<keyword id="KW-0002">3D-structure</keyword>
<keyword id="KW-0472">Membrane</keyword>
<keyword id="KW-0509">mRNA transport</keyword>
<keyword id="KW-0906">Nuclear pore complex</keyword>
<keyword id="KW-0539">Nucleus</keyword>
<keyword id="KW-0653">Protein transport</keyword>
<keyword id="KW-1185">Reference proteome</keyword>
<keyword id="KW-0811">Translocation</keyword>
<keyword id="KW-0813">Transport</keyword>
<feature type="chain" id="PRO_0000324190" description="Nuclear pore complex protein Nup85">
    <location>
        <begin position="1"/>
        <end position="653"/>
    </location>
</feature>
<evidence type="ECO:0000250" key="1"/>
<evidence type="ECO:0000250" key="2">
    <source>
        <dbReference type="UniProtKB" id="Q6DK84"/>
    </source>
</evidence>
<evidence type="ECO:0000250" key="3">
    <source>
        <dbReference type="UniProtKB" id="Q9BW27"/>
    </source>
</evidence>
<evidence type="ECO:0000305" key="4"/>
<reference key="1">
    <citation type="submission" date="2004-08" db="EMBL/GenBank/DDBJ databases">
        <authorList>
            <consortium name="NIH - Xenopus Gene Collection (XGC) project"/>
        </authorList>
    </citation>
    <scope>NUCLEOTIDE SEQUENCE [LARGE SCALE MRNA]</scope>
    <source>
        <tissue>Kidney</tissue>
    </source>
</reference>
<sequence>MEELDVDPAETPIPGLGQQNRHIGFSWGPGDLLLYETLYQKQGNSETAARCPFMYLVRSDEDIYSPVLRKLFNESHSIFVGLQKSAEEASGKSRKAQLVQVSRNYRSVLRACMEEMHTLSESTRETAQKYISQISILSAMELSWNLCEILFIESAPAGPLLILLLEWVRLHVCEVDNIVQDVLRSEKPTEHEKFWDGVTGYVLQGRMNEARQLLAKEASTSASARSMCRVLDDLLKKMPMLHTGGTQTLTEFELKWQHWREECERHLQNGTFSSNVHMEAVCRVLLGDEEVLLEKRDLMTTWYHFLVSRLLFKHPTVKPTELHFYAQSSLDMFLAGDSCPEPLDNILLAAFEFDIHQVIKEFSIVSSNWWFVAHLTDLLDHCQLFQAHNLYFGANMREFLLLDYASGLFSHHSLWQLGVDYFDYCPNLGREYLKLHMERIPLSTEKKALKALRICEQRQMTEQVRSICKTMAMQSLCNRRLGSALSWSIRAKDAAFATLISDRFLKEYCERGNFTDLDLIDNLGSAMLLSDRLTFLGKYREFHRMYSQEQFSEAASLLLSLMTARIAPCSFWLTLLLDALPLLEQKQVIFSAEQTYELMRCLEDRMAAKLESTSPDEIQKQDSSIDNTKVEMLRLALARNLARAIVTEGALQE</sequence>
<accession>Q68FJ0</accession>
<protein>
    <recommendedName>
        <fullName>Nuclear pore complex protein Nup85</fullName>
    </recommendedName>
    <alternativeName>
        <fullName>85 kDa nucleoporin</fullName>
    </alternativeName>
    <alternativeName>
        <fullName>Nucleoporin Nup85</fullName>
    </alternativeName>
</protein>
<organism>
    <name type="scientific">Xenopus laevis</name>
    <name type="common">African clawed frog</name>
    <dbReference type="NCBI Taxonomy" id="8355"/>
    <lineage>
        <taxon>Eukaryota</taxon>
        <taxon>Metazoa</taxon>
        <taxon>Chordata</taxon>
        <taxon>Craniata</taxon>
        <taxon>Vertebrata</taxon>
        <taxon>Euteleostomi</taxon>
        <taxon>Amphibia</taxon>
        <taxon>Batrachia</taxon>
        <taxon>Anura</taxon>
        <taxon>Pipoidea</taxon>
        <taxon>Pipidae</taxon>
        <taxon>Xenopodinae</taxon>
        <taxon>Xenopus</taxon>
        <taxon>Xenopus</taxon>
    </lineage>
</organism>
<comment type="function">
    <text evidence="2 3">Component of the nuclear pore complex (NPC) that seems to be required for NPC assembly and maintenance (By similarity). Involved in nephrogenesis (By similarity).</text>
</comment>
<comment type="subunit">
    <text evidence="1">Component of the nuclear pore complex (NPC).</text>
</comment>
<comment type="subcellular location">
    <subcellularLocation>
        <location evidence="3">Nucleus</location>
        <location evidence="3">Nuclear pore complex</location>
    </subcellularLocation>
    <subcellularLocation>
        <location evidence="3">Nucleus membrane</location>
    </subcellularLocation>
</comment>
<comment type="similarity">
    <text evidence="4">Belongs to the nucleoporin Nup85 family.</text>
</comment>
<dbReference type="EMBL" id="BC079790">
    <property type="protein sequence ID" value="AAH79790.1"/>
    <property type="molecule type" value="mRNA"/>
</dbReference>
<dbReference type="RefSeq" id="NP_001087440.1">
    <property type="nucleotide sequence ID" value="NM_001093971.1"/>
</dbReference>
<dbReference type="PDB" id="6LK8">
    <property type="method" value="EM"/>
    <property type="resolution" value="5.50 A"/>
    <property type="chains" value="B/b=1-653"/>
</dbReference>
<dbReference type="PDB" id="7FIK">
    <property type="method" value="EM"/>
    <property type="resolution" value="3.70 A"/>
    <property type="chains" value="B/b=1-653"/>
</dbReference>
<dbReference type="PDB" id="7TDZ">
    <property type="method" value="EM"/>
    <property type="resolution" value="6.90 A"/>
    <property type="chains" value="C/c=1-653"/>
</dbReference>
<dbReference type="PDB" id="7VCI">
    <property type="method" value="EM"/>
    <property type="resolution" value="8.10 A"/>
    <property type="chains" value="A/J=1-653"/>
</dbReference>
<dbReference type="PDB" id="7VOP">
    <property type="method" value="EM"/>
    <property type="resolution" value="8.70 A"/>
    <property type="chains" value="A/J=1-653"/>
</dbReference>
<dbReference type="PDB" id="7WB4">
    <property type="method" value="EM"/>
    <property type="resolution" value="5.60 A"/>
    <property type="chains" value="B/b=1-653"/>
</dbReference>
<dbReference type="PDBsum" id="6LK8"/>
<dbReference type="PDBsum" id="7FIK"/>
<dbReference type="PDBsum" id="7TDZ"/>
<dbReference type="PDBsum" id="7VCI"/>
<dbReference type="PDBsum" id="7VOP"/>
<dbReference type="PDBsum" id="7WB4"/>
<dbReference type="EMDB" id="EMD-0909"/>
<dbReference type="EMDB" id="EMD-31600"/>
<dbReference type="EMDB" id="EMD-31891"/>
<dbReference type="EMDB" id="EMD-32056"/>
<dbReference type="EMDB" id="EMD-32394"/>
<dbReference type="SMR" id="Q68FJ0"/>
<dbReference type="BioGRID" id="104124">
    <property type="interactions" value="3"/>
</dbReference>
<dbReference type="DNASU" id="447264"/>
<dbReference type="GeneID" id="447264"/>
<dbReference type="KEGG" id="xla:447264"/>
<dbReference type="AGR" id="Xenbase:XB-GENE-1008056"/>
<dbReference type="CTD" id="447264"/>
<dbReference type="Xenbase" id="XB-GENE-1008056">
    <property type="gene designation" value="nup85.L"/>
</dbReference>
<dbReference type="OrthoDB" id="17644at2759"/>
<dbReference type="Proteomes" id="UP000186698">
    <property type="component" value="Chromosome 9_10L"/>
</dbReference>
<dbReference type="Bgee" id="447264">
    <property type="expression patterns" value="Expressed in testis and 19 other cell types or tissues"/>
</dbReference>
<dbReference type="GO" id="GO:0005829">
    <property type="term" value="C:cytosol"/>
    <property type="evidence" value="ECO:0000304"/>
    <property type="project" value="Reactome"/>
</dbReference>
<dbReference type="GO" id="GO:0031965">
    <property type="term" value="C:nuclear membrane"/>
    <property type="evidence" value="ECO:0007669"/>
    <property type="project" value="UniProtKB-SubCell"/>
</dbReference>
<dbReference type="GO" id="GO:0031080">
    <property type="term" value="C:nuclear pore outer ring"/>
    <property type="evidence" value="ECO:0000250"/>
    <property type="project" value="UniProtKB"/>
</dbReference>
<dbReference type="GO" id="GO:0017056">
    <property type="term" value="F:structural constituent of nuclear pore"/>
    <property type="evidence" value="ECO:0000318"/>
    <property type="project" value="GO_Central"/>
</dbReference>
<dbReference type="GO" id="GO:0006406">
    <property type="term" value="P:mRNA export from nucleus"/>
    <property type="evidence" value="ECO:0000318"/>
    <property type="project" value="GO_Central"/>
</dbReference>
<dbReference type="GO" id="GO:0072006">
    <property type="term" value="P:nephron development"/>
    <property type="evidence" value="ECO:0000250"/>
    <property type="project" value="UniProtKB"/>
</dbReference>
<dbReference type="GO" id="GO:0045893">
    <property type="term" value="P:positive regulation of DNA-templated transcription"/>
    <property type="evidence" value="ECO:0000318"/>
    <property type="project" value="GO_Central"/>
</dbReference>
<dbReference type="GO" id="GO:0006606">
    <property type="term" value="P:protein import into nucleus"/>
    <property type="evidence" value="ECO:0000318"/>
    <property type="project" value="GO_Central"/>
</dbReference>
<dbReference type="InterPro" id="IPR011502">
    <property type="entry name" value="Nucleoporin_Nup85"/>
</dbReference>
<dbReference type="PANTHER" id="PTHR13373">
    <property type="entry name" value="FROUNT PROTEIN-RELATED"/>
    <property type="match status" value="1"/>
</dbReference>
<dbReference type="PANTHER" id="PTHR13373:SF21">
    <property type="entry name" value="NUCLEAR PORE COMPLEX PROTEIN NUP85"/>
    <property type="match status" value="1"/>
</dbReference>
<dbReference type="Pfam" id="PF07575">
    <property type="entry name" value="Nucleopor_Nup85"/>
    <property type="match status" value="1"/>
</dbReference>
<name>NUP85_XENLA</name>
<gene>
    <name type="primary">nup85</name>
</gene>
<proteinExistence type="evidence at protein level"/>